<organism>
    <name type="scientific">Pseudoalteromonas translucida (strain TAC 125)</name>
    <dbReference type="NCBI Taxonomy" id="326442"/>
    <lineage>
        <taxon>Bacteria</taxon>
        <taxon>Pseudomonadati</taxon>
        <taxon>Pseudomonadota</taxon>
        <taxon>Gammaproteobacteria</taxon>
        <taxon>Alteromonadales</taxon>
        <taxon>Pseudoalteromonadaceae</taxon>
        <taxon>Pseudoalteromonas</taxon>
    </lineage>
</organism>
<dbReference type="EMBL" id="CR954246">
    <property type="protein sequence ID" value="CAI85368.1"/>
    <property type="molecule type" value="Genomic_DNA"/>
</dbReference>
<dbReference type="SMR" id="Q3IDU0"/>
<dbReference type="STRING" id="326442.PSHAa0269"/>
<dbReference type="KEGG" id="pha:PSHAa0269"/>
<dbReference type="PATRIC" id="fig|326442.8.peg.256"/>
<dbReference type="eggNOG" id="COG0323">
    <property type="taxonomic scope" value="Bacteria"/>
</dbReference>
<dbReference type="HOGENOM" id="CLU_004131_5_1_6"/>
<dbReference type="BioCyc" id="PHAL326442:PSHA_RS01335-MONOMER"/>
<dbReference type="Proteomes" id="UP000006843">
    <property type="component" value="Chromosome I"/>
</dbReference>
<dbReference type="GO" id="GO:0032300">
    <property type="term" value="C:mismatch repair complex"/>
    <property type="evidence" value="ECO:0007669"/>
    <property type="project" value="InterPro"/>
</dbReference>
<dbReference type="GO" id="GO:0005524">
    <property type="term" value="F:ATP binding"/>
    <property type="evidence" value="ECO:0007669"/>
    <property type="project" value="InterPro"/>
</dbReference>
<dbReference type="GO" id="GO:0016887">
    <property type="term" value="F:ATP hydrolysis activity"/>
    <property type="evidence" value="ECO:0007669"/>
    <property type="project" value="InterPro"/>
</dbReference>
<dbReference type="GO" id="GO:0140664">
    <property type="term" value="F:ATP-dependent DNA damage sensor activity"/>
    <property type="evidence" value="ECO:0007669"/>
    <property type="project" value="InterPro"/>
</dbReference>
<dbReference type="GO" id="GO:0030983">
    <property type="term" value="F:mismatched DNA binding"/>
    <property type="evidence" value="ECO:0007669"/>
    <property type="project" value="InterPro"/>
</dbReference>
<dbReference type="GO" id="GO:0006298">
    <property type="term" value="P:mismatch repair"/>
    <property type="evidence" value="ECO:0007669"/>
    <property type="project" value="UniProtKB-UniRule"/>
</dbReference>
<dbReference type="CDD" id="cd16926">
    <property type="entry name" value="HATPase_MutL-MLH-PMS-like"/>
    <property type="match status" value="1"/>
</dbReference>
<dbReference type="CDD" id="cd03482">
    <property type="entry name" value="MutL_Trans_MutL"/>
    <property type="match status" value="1"/>
</dbReference>
<dbReference type="FunFam" id="3.30.565.10:FF:000003">
    <property type="entry name" value="DNA mismatch repair endonuclease MutL"/>
    <property type="match status" value="1"/>
</dbReference>
<dbReference type="Gene3D" id="3.30.230.10">
    <property type="match status" value="1"/>
</dbReference>
<dbReference type="Gene3D" id="3.30.565.10">
    <property type="entry name" value="Histidine kinase-like ATPase, C-terminal domain"/>
    <property type="match status" value="1"/>
</dbReference>
<dbReference type="Gene3D" id="3.30.1370.100">
    <property type="entry name" value="MutL, C-terminal domain, regulatory subdomain"/>
    <property type="match status" value="1"/>
</dbReference>
<dbReference type="HAMAP" id="MF_00149">
    <property type="entry name" value="DNA_mis_repair"/>
    <property type="match status" value="1"/>
</dbReference>
<dbReference type="InterPro" id="IPR014762">
    <property type="entry name" value="DNA_mismatch_repair_CS"/>
</dbReference>
<dbReference type="InterPro" id="IPR020667">
    <property type="entry name" value="DNA_mismatch_repair_MutL"/>
</dbReference>
<dbReference type="InterPro" id="IPR013507">
    <property type="entry name" value="DNA_mismatch_S5_2-like"/>
</dbReference>
<dbReference type="InterPro" id="IPR036890">
    <property type="entry name" value="HATPase_C_sf"/>
</dbReference>
<dbReference type="InterPro" id="IPR002099">
    <property type="entry name" value="MutL/Mlh/PMS"/>
</dbReference>
<dbReference type="InterPro" id="IPR038973">
    <property type="entry name" value="MutL/Mlh/Pms-like"/>
</dbReference>
<dbReference type="InterPro" id="IPR014790">
    <property type="entry name" value="MutL_C"/>
</dbReference>
<dbReference type="InterPro" id="IPR042121">
    <property type="entry name" value="MutL_C_regsub"/>
</dbReference>
<dbReference type="InterPro" id="IPR037198">
    <property type="entry name" value="MutL_C_sf"/>
</dbReference>
<dbReference type="InterPro" id="IPR020568">
    <property type="entry name" value="Ribosomal_Su5_D2-typ_SF"/>
</dbReference>
<dbReference type="InterPro" id="IPR014721">
    <property type="entry name" value="Ribsml_uS5_D2-typ_fold_subgr"/>
</dbReference>
<dbReference type="NCBIfam" id="TIGR00585">
    <property type="entry name" value="mutl"/>
    <property type="match status" value="1"/>
</dbReference>
<dbReference type="NCBIfam" id="NF000948">
    <property type="entry name" value="PRK00095.1-1"/>
    <property type="match status" value="1"/>
</dbReference>
<dbReference type="PANTHER" id="PTHR10073">
    <property type="entry name" value="DNA MISMATCH REPAIR PROTEIN MLH, PMS, MUTL"/>
    <property type="match status" value="1"/>
</dbReference>
<dbReference type="PANTHER" id="PTHR10073:SF12">
    <property type="entry name" value="DNA MISMATCH REPAIR PROTEIN MLH1"/>
    <property type="match status" value="1"/>
</dbReference>
<dbReference type="Pfam" id="PF01119">
    <property type="entry name" value="DNA_mis_repair"/>
    <property type="match status" value="1"/>
</dbReference>
<dbReference type="Pfam" id="PF13589">
    <property type="entry name" value="HATPase_c_3"/>
    <property type="match status" value="1"/>
</dbReference>
<dbReference type="Pfam" id="PF08676">
    <property type="entry name" value="MutL_C"/>
    <property type="match status" value="1"/>
</dbReference>
<dbReference type="SMART" id="SM01340">
    <property type="entry name" value="DNA_mis_repair"/>
    <property type="match status" value="1"/>
</dbReference>
<dbReference type="SUPFAM" id="SSF55874">
    <property type="entry name" value="ATPase domain of HSP90 chaperone/DNA topoisomerase II/histidine kinase"/>
    <property type="match status" value="1"/>
</dbReference>
<dbReference type="SUPFAM" id="SSF118116">
    <property type="entry name" value="DNA mismatch repair protein MutL"/>
    <property type="match status" value="1"/>
</dbReference>
<dbReference type="SUPFAM" id="SSF54211">
    <property type="entry name" value="Ribosomal protein S5 domain 2-like"/>
    <property type="match status" value="1"/>
</dbReference>
<dbReference type="PROSITE" id="PS00058">
    <property type="entry name" value="DNA_MISMATCH_REPAIR_1"/>
    <property type="match status" value="1"/>
</dbReference>
<evidence type="ECO:0000255" key="1">
    <source>
        <dbReference type="HAMAP-Rule" id="MF_00149"/>
    </source>
</evidence>
<evidence type="ECO:0000256" key="2">
    <source>
        <dbReference type="SAM" id="MobiDB-lite"/>
    </source>
</evidence>
<name>MUTL_PSET1</name>
<feature type="chain" id="PRO_1000071508" description="DNA mismatch repair protein MutL">
    <location>
        <begin position="1"/>
        <end position="618"/>
    </location>
</feature>
<feature type="region of interest" description="Disordered" evidence="2">
    <location>
        <begin position="348"/>
        <end position="400"/>
    </location>
</feature>
<feature type="compositionally biased region" description="Polar residues" evidence="2">
    <location>
        <begin position="348"/>
        <end position="359"/>
    </location>
</feature>
<feature type="compositionally biased region" description="Low complexity" evidence="2">
    <location>
        <begin position="377"/>
        <end position="388"/>
    </location>
</feature>
<keyword id="KW-0227">DNA damage</keyword>
<keyword id="KW-0234">DNA repair</keyword>
<keyword id="KW-1185">Reference proteome</keyword>
<gene>
    <name evidence="1" type="primary">mutL</name>
    <name type="ordered locus">PSHAa0269</name>
</gene>
<reference key="1">
    <citation type="journal article" date="2005" name="Genome Res.">
        <title>Coping with cold: the genome of the versatile marine Antarctica bacterium Pseudoalteromonas haloplanktis TAC125.</title>
        <authorList>
            <person name="Medigue C."/>
            <person name="Krin E."/>
            <person name="Pascal G."/>
            <person name="Barbe V."/>
            <person name="Bernsel A."/>
            <person name="Bertin P.N."/>
            <person name="Cheung F."/>
            <person name="Cruveiller S."/>
            <person name="D'Amico S."/>
            <person name="Duilio A."/>
            <person name="Fang G."/>
            <person name="Feller G."/>
            <person name="Ho C."/>
            <person name="Mangenot S."/>
            <person name="Marino G."/>
            <person name="Nilsson J."/>
            <person name="Parrilli E."/>
            <person name="Rocha E.P.C."/>
            <person name="Rouy Z."/>
            <person name="Sekowska A."/>
            <person name="Tutino M.L."/>
            <person name="Vallenet D."/>
            <person name="von Heijne G."/>
            <person name="Danchin A."/>
        </authorList>
    </citation>
    <scope>NUCLEOTIDE SEQUENCE [LARGE SCALE GENOMIC DNA]</scope>
    <source>
        <strain>TAC 125</strain>
    </source>
</reference>
<protein>
    <recommendedName>
        <fullName evidence="1">DNA mismatch repair protein MutL</fullName>
    </recommendedName>
</protein>
<sequence>MSIEILPARLANQIAAGEVVERPASVVKELVENSLDAGATRIQIDIERGGHKLIRIRDNGAGIAQDELTLALSRHATSKLKSLDDLENICSLGFRGEALASISSVSRLTLSSKTKHQEAAWQAFAQGRDMAVQVKPVAHPDGTTIEVKDLFFNTPARRKFLRTEKTEFSHIDELIKRIALSRFDVSITLTHNEKVVRQYRAKTDPSQAIARVAQVAGKAFAEQGLHIQSGEGGLQLHGWVLPVGSANTVQYTYVNNRMMRDKLILHAIRQAFEEVSGAQELPGFVIYIDIDPRQVDVNVHPAKHEVRFHQGRLVHDFILQAIKQVVVPLQGEFTNEPLNNLADTAFSQTDTARSPTGNFESGEVFDYPKSQLQPSHSVSSGGASLGSRSAGGSGGAYRATPSTNHHDINAFYQGVSEQHAAHFDQGAHVSVGVNQSHAVEQAVALKTVAIISINEGVCVFSSEQQLYCSHFKYALVDDWHEQIKEQGSLEGKALLLPVRVNLSKQDCELIAAQQSWFTLLGFELIIEKQFVMVKKLPACLYLLDVTSAVESLLEACKAPLENIESWLAWQMQHTPARFYSSNIFLAQQARMQNNPQTIERLRVKAVKIDIEHYLMQLD</sequence>
<comment type="function">
    <text evidence="1">This protein is involved in the repair of mismatches in DNA. It is required for dam-dependent methyl-directed DNA mismatch repair. May act as a 'molecular matchmaker', a protein that promotes the formation of a stable complex between two or more DNA-binding proteins in an ATP-dependent manner without itself being part of a final effector complex.</text>
</comment>
<comment type="similarity">
    <text evidence="1">Belongs to the DNA mismatch repair MutL/HexB family.</text>
</comment>
<proteinExistence type="inferred from homology"/>
<accession>Q3IDU0</accession>